<gene>
    <name evidence="1" type="primary">miaB</name>
    <name type="ordered locus">AM1_4660</name>
</gene>
<organism>
    <name type="scientific">Acaryochloris marina (strain MBIC 11017)</name>
    <dbReference type="NCBI Taxonomy" id="329726"/>
    <lineage>
        <taxon>Bacteria</taxon>
        <taxon>Bacillati</taxon>
        <taxon>Cyanobacteriota</taxon>
        <taxon>Cyanophyceae</taxon>
        <taxon>Acaryochloridales</taxon>
        <taxon>Acaryochloridaceae</taxon>
        <taxon>Acaryochloris</taxon>
    </lineage>
</organism>
<comment type="function">
    <text evidence="1">Catalyzes the methylthiolation of N6-(dimethylallyl)adenosine (i(6)A), leading to the formation of 2-methylthio-N6-(dimethylallyl)adenosine (ms(2)i(6)A) at position 37 in tRNAs that read codons beginning with uridine.</text>
</comment>
<comment type="catalytic activity">
    <reaction evidence="1">
        <text>N(6)-dimethylallyladenosine(37) in tRNA + (sulfur carrier)-SH + AH2 + 2 S-adenosyl-L-methionine = 2-methylsulfanyl-N(6)-dimethylallyladenosine(37) in tRNA + (sulfur carrier)-H + 5'-deoxyadenosine + L-methionine + A + S-adenosyl-L-homocysteine + 2 H(+)</text>
        <dbReference type="Rhea" id="RHEA:37067"/>
        <dbReference type="Rhea" id="RHEA-COMP:10375"/>
        <dbReference type="Rhea" id="RHEA-COMP:10376"/>
        <dbReference type="Rhea" id="RHEA-COMP:14737"/>
        <dbReference type="Rhea" id="RHEA-COMP:14739"/>
        <dbReference type="ChEBI" id="CHEBI:13193"/>
        <dbReference type="ChEBI" id="CHEBI:15378"/>
        <dbReference type="ChEBI" id="CHEBI:17319"/>
        <dbReference type="ChEBI" id="CHEBI:17499"/>
        <dbReference type="ChEBI" id="CHEBI:29917"/>
        <dbReference type="ChEBI" id="CHEBI:57844"/>
        <dbReference type="ChEBI" id="CHEBI:57856"/>
        <dbReference type="ChEBI" id="CHEBI:59789"/>
        <dbReference type="ChEBI" id="CHEBI:64428"/>
        <dbReference type="ChEBI" id="CHEBI:74415"/>
        <dbReference type="ChEBI" id="CHEBI:74417"/>
        <dbReference type="EC" id="2.8.4.3"/>
    </reaction>
</comment>
<comment type="cofactor">
    <cofactor evidence="1">
        <name>[4Fe-4S] cluster</name>
        <dbReference type="ChEBI" id="CHEBI:49883"/>
    </cofactor>
    <text evidence="1">Binds 2 [4Fe-4S] clusters. One cluster is coordinated with 3 cysteines and an exchangeable S-adenosyl-L-methionine.</text>
</comment>
<comment type="subunit">
    <text evidence="1">Monomer.</text>
</comment>
<comment type="subcellular location">
    <subcellularLocation>
        <location evidence="1">Cytoplasm</location>
    </subcellularLocation>
</comment>
<comment type="similarity">
    <text evidence="1">Belongs to the methylthiotransferase family. MiaB subfamily.</text>
</comment>
<accession>B0C0E2</accession>
<proteinExistence type="inferred from homology"/>
<dbReference type="EC" id="2.8.4.3" evidence="1"/>
<dbReference type="EMBL" id="CP000828">
    <property type="protein sequence ID" value="ABW29634.1"/>
    <property type="molecule type" value="Genomic_DNA"/>
</dbReference>
<dbReference type="RefSeq" id="WP_012164936.1">
    <property type="nucleotide sequence ID" value="NC_009925.1"/>
</dbReference>
<dbReference type="SMR" id="B0C0E2"/>
<dbReference type="STRING" id="329726.AM1_4660"/>
<dbReference type="KEGG" id="amr:AM1_4660"/>
<dbReference type="eggNOG" id="COG0621">
    <property type="taxonomic scope" value="Bacteria"/>
</dbReference>
<dbReference type="HOGENOM" id="CLU_018697_2_2_3"/>
<dbReference type="OrthoDB" id="9805215at2"/>
<dbReference type="Proteomes" id="UP000000268">
    <property type="component" value="Chromosome"/>
</dbReference>
<dbReference type="GO" id="GO:0005737">
    <property type="term" value="C:cytoplasm"/>
    <property type="evidence" value="ECO:0007669"/>
    <property type="project" value="UniProtKB-SubCell"/>
</dbReference>
<dbReference type="GO" id="GO:0051539">
    <property type="term" value="F:4 iron, 4 sulfur cluster binding"/>
    <property type="evidence" value="ECO:0007669"/>
    <property type="project" value="UniProtKB-UniRule"/>
</dbReference>
<dbReference type="GO" id="GO:0046872">
    <property type="term" value="F:metal ion binding"/>
    <property type="evidence" value="ECO:0007669"/>
    <property type="project" value="UniProtKB-KW"/>
</dbReference>
<dbReference type="GO" id="GO:0035596">
    <property type="term" value="F:methylthiotransferase activity"/>
    <property type="evidence" value="ECO:0007669"/>
    <property type="project" value="InterPro"/>
</dbReference>
<dbReference type="GO" id="GO:0035600">
    <property type="term" value="P:tRNA methylthiolation"/>
    <property type="evidence" value="ECO:0007669"/>
    <property type="project" value="TreeGrafter"/>
</dbReference>
<dbReference type="CDD" id="cd01335">
    <property type="entry name" value="Radical_SAM"/>
    <property type="match status" value="1"/>
</dbReference>
<dbReference type="FunFam" id="3.40.50.12160:FF:000006">
    <property type="entry name" value="tRNA-2-methylthio-N(6)-dimethylallyladenosine synthase"/>
    <property type="match status" value="1"/>
</dbReference>
<dbReference type="FunFam" id="3.80.30.20:FF:000001">
    <property type="entry name" value="tRNA-2-methylthio-N(6)-dimethylallyladenosine synthase 2"/>
    <property type="match status" value="1"/>
</dbReference>
<dbReference type="Gene3D" id="3.40.50.12160">
    <property type="entry name" value="Methylthiotransferase, N-terminal domain"/>
    <property type="match status" value="1"/>
</dbReference>
<dbReference type="Gene3D" id="3.80.30.20">
    <property type="entry name" value="tm_1862 like domain"/>
    <property type="match status" value="1"/>
</dbReference>
<dbReference type="HAMAP" id="MF_01864">
    <property type="entry name" value="tRNA_metthiotr_MiaB"/>
    <property type="match status" value="1"/>
</dbReference>
<dbReference type="InterPro" id="IPR006638">
    <property type="entry name" value="Elp3/MiaA/NifB-like_rSAM"/>
</dbReference>
<dbReference type="InterPro" id="IPR005839">
    <property type="entry name" value="Methylthiotransferase"/>
</dbReference>
<dbReference type="InterPro" id="IPR020612">
    <property type="entry name" value="Methylthiotransferase_CS"/>
</dbReference>
<dbReference type="InterPro" id="IPR013848">
    <property type="entry name" value="Methylthiotransferase_N"/>
</dbReference>
<dbReference type="InterPro" id="IPR038135">
    <property type="entry name" value="Methylthiotransferase_N_sf"/>
</dbReference>
<dbReference type="InterPro" id="IPR006463">
    <property type="entry name" value="MiaB_methiolase"/>
</dbReference>
<dbReference type="InterPro" id="IPR007197">
    <property type="entry name" value="rSAM"/>
</dbReference>
<dbReference type="InterPro" id="IPR023404">
    <property type="entry name" value="rSAM_horseshoe"/>
</dbReference>
<dbReference type="InterPro" id="IPR002792">
    <property type="entry name" value="TRAM_dom"/>
</dbReference>
<dbReference type="NCBIfam" id="TIGR01574">
    <property type="entry name" value="miaB-methiolase"/>
    <property type="match status" value="1"/>
</dbReference>
<dbReference type="NCBIfam" id="TIGR00089">
    <property type="entry name" value="MiaB/RimO family radical SAM methylthiotransferase"/>
    <property type="match status" value="1"/>
</dbReference>
<dbReference type="PANTHER" id="PTHR43020">
    <property type="entry name" value="CDK5 REGULATORY SUBUNIT-ASSOCIATED PROTEIN 1"/>
    <property type="match status" value="1"/>
</dbReference>
<dbReference type="PANTHER" id="PTHR43020:SF2">
    <property type="entry name" value="MITOCHONDRIAL TRNA METHYLTHIOTRANSFERASE CDK5RAP1"/>
    <property type="match status" value="1"/>
</dbReference>
<dbReference type="Pfam" id="PF04055">
    <property type="entry name" value="Radical_SAM"/>
    <property type="match status" value="1"/>
</dbReference>
<dbReference type="Pfam" id="PF01938">
    <property type="entry name" value="TRAM"/>
    <property type="match status" value="1"/>
</dbReference>
<dbReference type="Pfam" id="PF00919">
    <property type="entry name" value="UPF0004"/>
    <property type="match status" value="1"/>
</dbReference>
<dbReference type="SFLD" id="SFLDF00273">
    <property type="entry name" value="(dimethylallyl)adenosine_tRNA"/>
    <property type="match status" value="1"/>
</dbReference>
<dbReference type="SFLD" id="SFLDG01082">
    <property type="entry name" value="B12-binding_domain_containing"/>
    <property type="match status" value="1"/>
</dbReference>
<dbReference type="SFLD" id="SFLDS00029">
    <property type="entry name" value="Radical_SAM"/>
    <property type="match status" value="1"/>
</dbReference>
<dbReference type="SMART" id="SM00729">
    <property type="entry name" value="Elp3"/>
    <property type="match status" value="1"/>
</dbReference>
<dbReference type="SUPFAM" id="SSF102114">
    <property type="entry name" value="Radical SAM enzymes"/>
    <property type="match status" value="1"/>
</dbReference>
<dbReference type="PROSITE" id="PS51449">
    <property type="entry name" value="MTTASE_N"/>
    <property type="match status" value="1"/>
</dbReference>
<dbReference type="PROSITE" id="PS01278">
    <property type="entry name" value="MTTASE_RADICAL"/>
    <property type="match status" value="1"/>
</dbReference>
<dbReference type="PROSITE" id="PS51918">
    <property type="entry name" value="RADICAL_SAM"/>
    <property type="match status" value="1"/>
</dbReference>
<dbReference type="PROSITE" id="PS50926">
    <property type="entry name" value="TRAM"/>
    <property type="match status" value="1"/>
</dbReference>
<keyword id="KW-0004">4Fe-4S</keyword>
<keyword id="KW-0963">Cytoplasm</keyword>
<keyword id="KW-0408">Iron</keyword>
<keyword id="KW-0411">Iron-sulfur</keyword>
<keyword id="KW-0479">Metal-binding</keyword>
<keyword id="KW-1185">Reference proteome</keyword>
<keyword id="KW-0949">S-adenosyl-L-methionine</keyword>
<keyword id="KW-0808">Transferase</keyword>
<keyword id="KW-0819">tRNA processing</keyword>
<evidence type="ECO:0000255" key="1">
    <source>
        <dbReference type="HAMAP-Rule" id="MF_01864"/>
    </source>
</evidence>
<evidence type="ECO:0000255" key="2">
    <source>
        <dbReference type="PROSITE-ProRule" id="PRU01266"/>
    </source>
</evidence>
<reference key="1">
    <citation type="journal article" date="2008" name="Proc. Natl. Acad. Sci. U.S.A.">
        <title>Niche adaptation and genome expansion in the chlorophyll d-producing cyanobacterium Acaryochloris marina.</title>
        <authorList>
            <person name="Swingley W.D."/>
            <person name="Chen M."/>
            <person name="Cheung P.C."/>
            <person name="Conrad A.L."/>
            <person name="Dejesa L.C."/>
            <person name="Hao J."/>
            <person name="Honchak B.M."/>
            <person name="Karbach L.E."/>
            <person name="Kurdoglu A."/>
            <person name="Lahiri S."/>
            <person name="Mastrian S.D."/>
            <person name="Miyashita H."/>
            <person name="Page L."/>
            <person name="Ramakrishna P."/>
            <person name="Satoh S."/>
            <person name="Sattley W.M."/>
            <person name="Shimada Y."/>
            <person name="Taylor H.L."/>
            <person name="Tomo T."/>
            <person name="Tsuchiya T."/>
            <person name="Wang Z.T."/>
            <person name="Raymond J."/>
            <person name="Mimuro M."/>
            <person name="Blankenship R.E."/>
            <person name="Touchman J.W."/>
        </authorList>
    </citation>
    <scope>NUCLEOTIDE SEQUENCE [LARGE SCALE GENOMIC DNA]</scope>
    <source>
        <strain>MBIC 11017</strain>
    </source>
</reference>
<name>MIAB_ACAM1</name>
<feature type="chain" id="PRO_0000374079" description="tRNA-2-methylthio-N(6)-dimethylallyladenosine synthase">
    <location>
        <begin position="1"/>
        <end position="454"/>
    </location>
</feature>
<feature type="domain" description="MTTase N-terminal" evidence="1">
    <location>
        <begin position="6"/>
        <end position="122"/>
    </location>
</feature>
<feature type="domain" description="Radical SAM core" evidence="2">
    <location>
        <begin position="143"/>
        <end position="384"/>
    </location>
</feature>
<feature type="domain" description="TRAM" evidence="1">
    <location>
        <begin position="383"/>
        <end position="447"/>
    </location>
</feature>
<feature type="binding site" evidence="1">
    <location>
        <position position="15"/>
    </location>
    <ligand>
        <name>[4Fe-4S] cluster</name>
        <dbReference type="ChEBI" id="CHEBI:49883"/>
        <label>1</label>
    </ligand>
</feature>
<feature type="binding site" evidence="1">
    <location>
        <position position="51"/>
    </location>
    <ligand>
        <name>[4Fe-4S] cluster</name>
        <dbReference type="ChEBI" id="CHEBI:49883"/>
        <label>1</label>
    </ligand>
</feature>
<feature type="binding site" evidence="1">
    <location>
        <position position="85"/>
    </location>
    <ligand>
        <name>[4Fe-4S] cluster</name>
        <dbReference type="ChEBI" id="CHEBI:49883"/>
        <label>1</label>
    </ligand>
</feature>
<feature type="binding site" evidence="1">
    <location>
        <position position="157"/>
    </location>
    <ligand>
        <name>[4Fe-4S] cluster</name>
        <dbReference type="ChEBI" id="CHEBI:49883"/>
        <label>2</label>
        <note>4Fe-4S-S-AdoMet</note>
    </ligand>
</feature>
<feature type="binding site" evidence="1">
    <location>
        <position position="161"/>
    </location>
    <ligand>
        <name>[4Fe-4S] cluster</name>
        <dbReference type="ChEBI" id="CHEBI:49883"/>
        <label>2</label>
        <note>4Fe-4S-S-AdoMet</note>
    </ligand>
</feature>
<feature type="binding site" evidence="1">
    <location>
        <position position="164"/>
    </location>
    <ligand>
        <name>[4Fe-4S] cluster</name>
        <dbReference type="ChEBI" id="CHEBI:49883"/>
        <label>2</label>
        <note>4Fe-4S-S-AdoMet</note>
    </ligand>
</feature>
<protein>
    <recommendedName>
        <fullName evidence="1">tRNA-2-methylthio-N(6)-dimethylallyladenosine synthase</fullName>
        <ecNumber evidence="1">2.8.4.3</ecNumber>
    </recommendedName>
    <alternativeName>
        <fullName evidence="1">(Dimethylallyl)adenosine tRNA methylthiotransferase MiaB</fullName>
    </alternativeName>
    <alternativeName>
        <fullName evidence="1">tRNA-i(6)A37 methylthiotransferase</fullName>
    </alternativeName>
</protein>
<sequence length="454" mass="51260">MSLDSRRYHITTYGCQMNKADSERMAGVLENMGYQWSENPDDANLILCNTCTIRDNAEHKVYSYLGRQAKRKHAQPDLTLVVAGCVAQQEGDALLRRVPELDLVMGPQHANRLQDLLEQVASGQQVLATEPIHIVEDITKPRRDSAVTAWVNVIYGCNERCTYCVVPNVRGVEQSRTPEAIRAEMVQLGEQGFKEVTLLGQNIDAYGRDLPGTTSEGRHQHTLTDLLYFVHDVPGIERIRFATSHPRYFTERLIQACYELPKVCEHFHIPFQSGDNDVLKAMSRGYTHEKYRRIIDNIRAIMPDASISADAIVGFPGETEEQFMNTMQLVEDIEFDLLNTAAYSPRPGTPAALWDNQLSEEVKADRLQRLNRLVGVCAELRSQRYANRIEEVLVEDQNPKDPTQVMGRTRGNRLTFFPGNIEQLRGEIIAVKVTEVRSFSLTGEPLSSVATAVR</sequence>